<accession>Q5PKA3</accession>
<keyword id="KW-0963">Cytoplasm</keyword>
<keyword id="KW-0210">Decarboxylase</keyword>
<keyword id="KW-0456">Lyase</keyword>
<keyword id="KW-0627">Porphyrin biosynthesis</keyword>
<gene>
    <name evidence="1" type="primary">hemE</name>
    <name type="ordered locus">SPA4004</name>
</gene>
<name>DCUP_SALPA</name>
<protein>
    <recommendedName>
        <fullName evidence="1">Uroporphyrinogen decarboxylase</fullName>
        <shortName evidence="1">UPD</shortName>
        <shortName evidence="1">URO-D</shortName>
        <ecNumber evidence="1">4.1.1.37</ecNumber>
    </recommendedName>
</protein>
<reference key="1">
    <citation type="journal article" date="2004" name="Nat. Genet.">
        <title>Comparison of genome degradation in Paratyphi A and Typhi, human-restricted serovars of Salmonella enterica that cause typhoid.</title>
        <authorList>
            <person name="McClelland M."/>
            <person name="Sanderson K.E."/>
            <person name="Clifton S.W."/>
            <person name="Latreille P."/>
            <person name="Porwollik S."/>
            <person name="Sabo A."/>
            <person name="Meyer R."/>
            <person name="Bieri T."/>
            <person name="Ozersky P."/>
            <person name="McLellan M."/>
            <person name="Harkins C.R."/>
            <person name="Wang C."/>
            <person name="Nguyen C."/>
            <person name="Berghoff A."/>
            <person name="Elliott G."/>
            <person name="Kohlberg S."/>
            <person name="Strong C."/>
            <person name="Du F."/>
            <person name="Carter J."/>
            <person name="Kremizki C."/>
            <person name="Layman D."/>
            <person name="Leonard S."/>
            <person name="Sun H."/>
            <person name="Fulton L."/>
            <person name="Nash W."/>
            <person name="Miner T."/>
            <person name="Minx P."/>
            <person name="Delehaunty K."/>
            <person name="Fronick C."/>
            <person name="Magrini V."/>
            <person name="Nhan M."/>
            <person name="Warren W."/>
            <person name="Florea L."/>
            <person name="Spieth J."/>
            <person name="Wilson R.K."/>
        </authorList>
    </citation>
    <scope>NUCLEOTIDE SEQUENCE [LARGE SCALE GENOMIC DNA]</scope>
    <source>
        <strain>ATCC 9150 / SARB42</strain>
    </source>
</reference>
<organism>
    <name type="scientific">Salmonella paratyphi A (strain ATCC 9150 / SARB42)</name>
    <dbReference type="NCBI Taxonomy" id="295319"/>
    <lineage>
        <taxon>Bacteria</taxon>
        <taxon>Pseudomonadati</taxon>
        <taxon>Pseudomonadota</taxon>
        <taxon>Gammaproteobacteria</taxon>
        <taxon>Enterobacterales</taxon>
        <taxon>Enterobacteriaceae</taxon>
        <taxon>Salmonella</taxon>
    </lineage>
</organism>
<evidence type="ECO:0000255" key="1">
    <source>
        <dbReference type="HAMAP-Rule" id="MF_00218"/>
    </source>
</evidence>
<proteinExistence type="inferred from homology"/>
<comment type="function">
    <text evidence="1">Catalyzes the decarboxylation of four acetate groups of uroporphyrinogen-III to yield coproporphyrinogen-III.</text>
</comment>
<comment type="catalytic activity">
    <reaction evidence="1">
        <text>uroporphyrinogen III + 4 H(+) = coproporphyrinogen III + 4 CO2</text>
        <dbReference type="Rhea" id="RHEA:19865"/>
        <dbReference type="ChEBI" id="CHEBI:15378"/>
        <dbReference type="ChEBI" id="CHEBI:16526"/>
        <dbReference type="ChEBI" id="CHEBI:57308"/>
        <dbReference type="ChEBI" id="CHEBI:57309"/>
        <dbReference type="EC" id="4.1.1.37"/>
    </reaction>
</comment>
<comment type="pathway">
    <text evidence="1">Porphyrin-containing compound metabolism; protoporphyrin-IX biosynthesis; coproporphyrinogen-III from 5-aminolevulinate: step 4/4.</text>
</comment>
<comment type="subunit">
    <text evidence="1">Homodimer.</text>
</comment>
<comment type="subcellular location">
    <subcellularLocation>
        <location evidence="1">Cytoplasm</location>
    </subcellularLocation>
</comment>
<comment type="similarity">
    <text evidence="1">Belongs to the uroporphyrinogen decarboxylase family.</text>
</comment>
<feature type="chain" id="PRO_1000023965" description="Uroporphyrinogen decarboxylase">
    <location>
        <begin position="1"/>
        <end position="354"/>
    </location>
</feature>
<feature type="binding site" evidence="1">
    <location>
        <begin position="27"/>
        <end position="31"/>
    </location>
    <ligand>
        <name>substrate</name>
    </ligand>
</feature>
<feature type="binding site" evidence="1">
    <location>
        <position position="77"/>
    </location>
    <ligand>
        <name>substrate</name>
    </ligand>
</feature>
<feature type="binding site" evidence="1">
    <location>
        <position position="154"/>
    </location>
    <ligand>
        <name>substrate</name>
    </ligand>
</feature>
<feature type="binding site" evidence="1">
    <location>
        <position position="209"/>
    </location>
    <ligand>
        <name>substrate</name>
    </ligand>
</feature>
<feature type="binding site" evidence="1">
    <location>
        <position position="327"/>
    </location>
    <ligand>
        <name>substrate</name>
    </ligand>
</feature>
<feature type="site" description="Transition state stabilizer" evidence="1">
    <location>
        <position position="77"/>
    </location>
</feature>
<sequence length="354" mass="39149">MTELKNDRYLRALLRQPVDVTPVWMMRQAGRYLPEYKATRAQAGDFMSLCKNAELACEVTLQPLRRYPLDAAILFSDILTIPDAMGLGLYFEAGEGPRFTAPVTCKADVDKLPIPDPEDELGYVMNAVRTIRRELKGEVPLIGFSGSPWTLATYMVEGGSSKAFTVIKKMMYADPQALHLLLDKLAKSVTLYLNAQIKAGAQSVMIFDTWGGVLTGRDYQQFSLYYMHKIVDGLLRENDGRRVPVTLFTKGGGQWLEAMAETGCDALGLDWTTDIADARRRVGHKVALQGNMDPSMLYAPPARIEDEVATILAGFGQGEGHVFNLGHGIHQDVPPEHAGAFVEAVHRLSAQYHS</sequence>
<dbReference type="EC" id="4.1.1.37" evidence="1"/>
<dbReference type="EMBL" id="CP000026">
    <property type="protein sequence ID" value="AAV79756.1"/>
    <property type="molecule type" value="Genomic_DNA"/>
</dbReference>
<dbReference type="RefSeq" id="WP_000137620.1">
    <property type="nucleotide sequence ID" value="NC_006511.1"/>
</dbReference>
<dbReference type="SMR" id="Q5PKA3"/>
<dbReference type="KEGG" id="spt:SPA4004"/>
<dbReference type="HOGENOM" id="CLU_040933_0_0_6"/>
<dbReference type="UniPathway" id="UPA00251">
    <property type="reaction ID" value="UER00321"/>
</dbReference>
<dbReference type="Proteomes" id="UP000008185">
    <property type="component" value="Chromosome"/>
</dbReference>
<dbReference type="GO" id="GO:0005829">
    <property type="term" value="C:cytosol"/>
    <property type="evidence" value="ECO:0007669"/>
    <property type="project" value="TreeGrafter"/>
</dbReference>
<dbReference type="GO" id="GO:0004853">
    <property type="term" value="F:uroporphyrinogen decarboxylase activity"/>
    <property type="evidence" value="ECO:0007669"/>
    <property type="project" value="UniProtKB-UniRule"/>
</dbReference>
<dbReference type="GO" id="GO:0019353">
    <property type="term" value="P:protoporphyrinogen IX biosynthetic process from glutamate"/>
    <property type="evidence" value="ECO:0007669"/>
    <property type="project" value="TreeGrafter"/>
</dbReference>
<dbReference type="CDD" id="cd00717">
    <property type="entry name" value="URO-D"/>
    <property type="match status" value="1"/>
</dbReference>
<dbReference type="FunFam" id="3.20.20.210:FF:000001">
    <property type="entry name" value="Uroporphyrinogen decarboxylase"/>
    <property type="match status" value="1"/>
</dbReference>
<dbReference type="Gene3D" id="3.20.20.210">
    <property type="match status" value="1"/>
</dbReference>
<dbReference type="HAMAP" id="MF_00218">
    <property type="entry name" value="URO_D"/>
    <property type="match status" value="1"/>
</dbReference>
<dbReference type="InterPro" id="IPR038071">
    <property type="entry name" value="UROD/MetE-like_sf"/>
</dbReference>
<dbReference type="InterPro" id="IPR006361">
    <property type="entry name" value="Uroporphyrinogen_deCO2ase_HemE"/>
</dbReference>
<dbReference type="InterPro" id="IPR000257">
    <property type="entry name" value="Uroporphyrinogen_deCOase"/>
</dbReference>
<dbReference type="NCBIfam" id="TIGR01464">
    <property type="entry name" value="hemE"/>
    <property type="match status" value="1"/>
</dbReference>
<dbReference type="PANTHER" id="PTHR21091">
    <property type="entry name" value="METHYLTETRAHYDROFOLATE:HOMOCYSTEINE METHYLTRANSFERASE RELATED"/>
    <property type="match status" value="1"/>
</dbReference>
<dbReference type="PANTHER" id="PTHR21091:SF169">
    <property type="entry name" value="UROPORPHYRINOGEN DECARBOXYLASE"/>
    <property type="match status" value="1"/>
</dbReference>
<dbReference type="Pfam" id="PF01208">
    <property type="entry name" value="URO-D"/>
    <property type="match status" value="1"/>
</dbReference>
<dbReference type="SUPFAM" id="SSF51726">
    <property type="entry name" value="UROD/MetE-like"/>
    <property type="match status" value="1"/>
</dbReference>
<dbReference type="PROSITE" id="PS00906">
    <property type="entry name" value="UROD_1"/>
    <property type="match status" value="1"/>
</dbReference>
<dbReference type="PROSITE" id="PS00907">
    <property type="entry name" value="UROD_2"/>
    <property type="match status" value="1"/>
</dbReference>